<feature type="chain" id="PRO_0000170678" description="Mannonate dehydratase">
    <location>
        <begin position="1"/>
        <end position="349"/>
    </location>
</feature>
<gene>
    <name evidence="1" type="primary">uxuA</name>
    <name type="ordered locus">OB3411</name>
</gene>
<keyword id="KW-0408">Iron</keyword>
<keyword id="KW-0456">Lyase</keyword>
<keyword id="KW-0464">Manganese</keyword>
<keyword id="KW-1185">Reference proteome</keyword>
<sequence length="349" mass="39850">MQLSFRWYGDSDPVTLKQIKQIPDMKHIVSAIYDVPVGDVWTKDKINALKSSIEQEGLTLSVMESLPVHESIKLGEANRDNLIENYKKSLRNLGESGIKTVCYNFMPVFDWTRSNLDYELEDGSKTLMYDNDFVKDIDPVTTNLNLPGWDESYTKEEMATLIEKYRQFDEEDLWKNLEYFLNAVLPIAIEHDIDLTIHPDDPPWSIFGIPRIIKTKESYQRLIAINSSKNNGICFCTGSLGCLEENDLPEIIKEFGDHIHFVHMRNIKRLDNHSFVESGHLSKYGSVDMKAVVRALKDINYKGTIRPDHGRMIWGETGKAGYGLFDRALGATYINGLIEGVETNDTTIS</sequence>
<evidence type="ECO:0000255" key="1">
    <source>
        <dbReference type="HAMAP-Rule" id="MF_00106"/>
    </source>
</evidence>
<organism>
    <name type="scientific">Oceanobacillus iheyensis (strain DSM 14371 / CIP 107618 / JCM 11309 / KCTC 3954 / HTE831)</name>
    <dbReference type="NCBI Taxonomy" id="221109"/>
    <lineage>
        <taxon>Bacteria</taxon>
        <taxon>Bacillati</taxon>
        <taxon>Bacillota</taxon>
        <taxon>Bacilli</taxon>
        <taxon>Bacillales</taxon>
        <taxon>Bacillaceae</taxon>
        <taxon>Oceanobacillus</taxon>
    </lineage>
</organism>
<name>UXUA_OCEIH</name>
<reference key="1">
    <citation type="journal article" date="2002" name="Nucleic Acids Res.">
        <title>Genome sequence of Oceanobacillus iheyensis isolated from the Iheya Ridge and its unexpected adaptive capabilities to extreme environments.</title>
        <authorList>
            <person name="Takami H."/>
            <person name="Takaki Y."/>
            <person name="Uchiyama I."/>
        </authorList>
    </citation>
    <scope>NUCLEOTIDE SEQUENCE [LARGE SCALE GENOMIC DNA]</scope>
    <source>
        <strain>DSM 14371 / CIP 107618 / JCM 11309 / KCTC 3954 / HTE831</strain>
    </source>
</reference>
<comment type="function">
    <text evidence="1">Catalyzes the dehydration of D-mannonate.</text>
</comment>
<comment type="catalytic activity">
    <reaction evidence="1">
        <text>D-mannonate = 2-dehydro-3-deoxy-D-gluconate + H2O</text>
        <dbReference type="Rhea" id="RHEA:20097"/>
        <dbReference type="ChEBI" id="CHEBI:15377"/>
        <dbReference type="ChEBI" id="CHEBI:17767"/>
        <dbReference type="ChEBI" id="CHEBI:57990"/>
        <dbReference type="EC" id="4.2.1.8"/>
    </reaction>
</comment>
<comment type="cofactor">
    <cofactor evidence="1">
        <name>Fe(2+)</name>
        <dbReference type="ChEBI" id="CHEBI:29033"/>
    </cofactor>
    <cofactor evidence="1">
        <name>Mn(2+)</name>
        <dbReference type="ChEBI" id="CHEBI:29035"/>
    </cofactor>
</comment>
<comment type="pathway">
    <text evidence="1">Carbohydrate metabolism; pentose and glucuronate interconversion.</text>
</comment>
<comment type="similarity">
    <text evidence="1">Belongs to the mannonate dehydratase family.</text>
</comment>
<protein>
    <recommendedName>
        <fullName evidence="1">Mannonate dehydratase</fullName>
        <ecNumber evidence="1">4.2.1.8</ecNumber>
    </recommendedName>
    <alternativeName>
        <fullName evidence="1">D-mannonate hydro-lyase</fullName>
    </alternativeName>
</protein>
<proteinExistence type="inferred from homology"/>
<accession>Q8EL21</accession>
<dbReference type="EC" id="4.2.1.8" evidence="1"/>
<dbReference type="EMBL" id="BA000028">
    <property type="protein sequence ID" value="BAC15367.1"/>
    <property type="molecule type" value="Genomic_DNA"/>
</dbReference>
<dbReference type="RefSeq" id="WP_011067809.1">
    <property type="nucleotide sequence ID" value="NC_004193.1"/>
</dbReference>
<dbReference type="SMR" id="Q8EL21"/>
<dbReference type="STRING" id="221109.gene:10735663"/>
<dbReference type="KEGG" id="oih:OB3411"/>
<dbReference type="eggNOG" id="COG1312">
    <property type="taxonomic scope" value="Bacteria"/>
</dbReference>
<dbReference type="HOGENOM" id="CLU_058621_1_0_9"/>
<dbReference type="OrthoDB" id="9780250at2"/>
<dbReference type="PhylomeDB" id="Q8EL21"/>
<dbReference type="UniPathway" id="UPA00246"/>
<dbReference type="Proteomes" id="UP000000822">
    <property type="component" value="Chromosome"/>
</dbReference>
<dbReference type="GO" id="GO:0008198">
    <property type="term" value="F:ferrous iron binding"/>
    <property type="evidence" value="ECO:0007669"/>
    <property type="project" value="TreeGrafter"/>
</dbReference>
<dbReference type="GO" id="GO:0030145">
    <property type="term" value="F:manganese ion binding"/>
    <property type="evidence" value="ECO:0007669"/>
    <property type="project" value="TreeGrafter"/>
</dbReference>
<dbReference type="GO" id="GO:0008927">
    <property type="term" value="F:mannonate dehydratase activity"/>
    <property type="evidence" value="ECO:0007669"/>
    <property type="project" value="UniProtKB-UniRule"/>
</dbReference>
<dbReference type="GO" id="GO:0042840">
    <property type="term" value="P:D-glucuronate catabolic process"/>
    <property type="evidence" value="ECO:0007669"/>
    <property type="project" value="TreeGrafter"/>
</dbReference>
<dbReference type="Gene3D" id="3.20.20.150">
    <property type="entry name" value="Divalent-metal-dependent TIM barrel enzymes"/>
    <property type="match status" value="1"/>
</dbReference>
<dbReference type="HAMAP" id="MF_00106">
    <property type="entry name" value="UxuA"/>
    <property type="match status" value="1"/>
</dbReference>
<dbReference type="InterPro" id="IPR004628">
    <property type="entry name" value="Man_deHydtase"/>
</dbReference>
<dbReference type="InterPro" id="IPR036237">
    <property type="entry name" value="Xyl_isomerase-like_sf"/>
</dbReference>
<dbReference type="NCBIfam" id="NF003027">
    <property type="entry name" value="PRK03906.1"/>
    <property type="match status" value="2"/>
</dbReference>
<dbReference type="NCBIfam" id="TIGR00695">
    <property type="entry name" value="uxuA"/>
    <property type="match status" value="1"/>
</dbReference>
<dbReference type="PANTHER" id="PTHR30387">
    <property type="entry name" value="MANNONATE DEHYDRATASE"/>
    <property type="match status" value="1"/>
</dbReference>
<dbReference type="PANTHER" id="PTHR30387:SF2">
    <property type="entry name" value="MANNONATE DEHYDRATASE"/>
    <property type="match status" value="1"/>
</dbReference>
<dbReference type="Pfam" id="PF03786">
    <property type="entry name" value="UxuA"/>
    <property type="match status" value="1"/>
</dbReference>
<dbReference type="PIRSF" id="PIRSF016049">
    <property type="entry name" value="Man_dehyd"/>
    <property type="match status" value="1"/>
</dbReference>
<dbReference type="SUPFAM" id="SSF51658">
    <property type="entry name" value="Xylose isomerase-like"/>
    <property type="match status" value="1"/>
</dbReference>